<sequence>MGKDEGIPVRVALRCRPLVPKENNEGCKMCLTFVPGEQQVIVGTEKSFTYDYVFDPSAEQEEVYNSAVAPLIKGLFKGYNATVLAYGQTGSGKTYSMGGAYTHNQENEPTVGVIPRTVIALFREIHQRPEWEFNLKVSYLEIYNEEILDLLYAARDKTNTISIREDPKEGIKICGLTERDVKTALDTLSCLEQGNSSRTVASTAMNSQSSRSHAIFTISIEQRKEGDKNNSFRSKLHLVDLAGSERQKKTKAEGDRLKEGISINRGLLCLGNVISALGDESKKGGFVPYRDSKLTRLLQDSLGGNSHTLMIACVSPADSNMEETLNTLRYADRARKIKNKPIVNTDPQAAELQRLKLQVQELQVLLLQAHGGTLPVLNSMEPSENLQSLMERNKNLEKENGKLSRELGEAAVQTAQFLEKIIMTEQQNEKLGSKMEELKQHAACKVNLQRLVETLEDQELKDNVEVIQNLQQVIVQLQDESSGIAGSIEAMDEEAASFPVPEEDSGEKRSSDGFTTNHALRQAQLSKELIELNKALVMKEALAKKMAQNDRQLEPIQSEYLNNIKHLESEVGVLQKEKEELILALHSAKKDNNQAKLSERRRKRLQELEGQMTELKKKLGEQSKLLKLRESTEKTVAKMNQEIQGMKMQRVQLMRQMKEDAEKFRTWKQQKTKEVIQLKEKDRKRQYELLKLERDFQKQANVLRRKTEEAASANKRLKEALQRQKEAMEKRKDSQSKGMEGAASRVKNWLANEVEVLVSTEEAQRHLNDLLEDRKILAQDIAQLKQKTDAGERIPTKIRRRTYTVAELENLEEEASVTKQIESLETEMELRSAQIADLQQKLLDADGEEEMVKRRWETISNIMEAKCALKYLITELVSSKVAGSKLESSVKQNRAHVADLQKNIFEERNQMAEMETEHQSQLMQLEQHHQEKILYLLSQLQQKQASVPVTIEELPAEEITEREKQLMERLKFQDEEIEKMKALCEKNQQLLQENDMYKQKLALLHVASGKKLHNILPAAEICSPDSPFDFIPPKPRGKRRTNAKSAAVILEDLLSESESEEESDDKNWEPGNNSKQSKKLTSKCSCKARCGNKMCGCRKTKQNCSDDCFCDPSKCRNRDNHMDEGKHEDQSLESENSKIDYPDVTAGGSFFTPPCVTPTKKVLREISDIGQVLSIKLQRKPSTASASASVMESQENQTSILTKKKKVLCNSNTSFFSGCSAITEDE</sequence>
<protein>
    <recommendedName>
        <fullName>Chromosome-associated kinesin KIF4</fullName>
    </recommendedName>
    <alternativeName>
        <fullName>Chromokinesin</fullName>
    </alternativeName>
    <alternativeName>
        <fullName>Chromosome-associated kinesin KLP1</fullName>
    </alternativeName>
</protein>
<dbReference type="EMBL" id="X82012">
    <property type="protein sequence ID" value="CAA57539.1"/>
    <property type="molecule type" value="mRNA"/>
</dbReference>
<dbReference type="PIR" id="I51617">
    <property type="entry name" value="I51617"/>
</dbReference>
<dbReference type="RefSeq" id="NP_001081019.1">
    <property type="nucleotide sequence ID" value="NM_001087550.1"/>
</dbReference>
<dbReference type="SMR" id="Q91784"/>
<dbReference type="BioGRID" id="98934">
    <property type="interactions" value="2"/>
</dbReference>
<dbReference type="DIP" id="DIP-48591N"/>
<dbReference type="IntAct" id="Q91784">
    <property type="interactions" value="4"/>
</dbReference>
<dbReference type="GeneID" id="394332"/>
<dbReference type="KEGG" id="xla:394332"/>
<dbReference type="AGR" id="Xenbase:XB-GENE-6079277"/>
<dbReference type="CTD" id="394332"/>
<dbReference type="Xenbase" id="XB-GENE-6079277">
    <property type="gene designation" value="kif4a.S"/>
</dbReference>
<dbReference type="OrthoDB" id="3176171at2759"/>
<dbReference type="Proteomes" id="UP000186698">
    <property type="component" value="Chromosome 8S"/>
</dbReference>
<dbReference type="Bgee" id="394332">
    <property type="expression patterns" value="Expressed in egg cell and 18 other cell types or tissues"/>
</dbReference>
<dbReference type="GO" id="GO:0005694">
    <property type="term" value="C:chromosome"/>
    <property type="evidence" value="ECO:0007669"/>
    <property type="project" value="UniProtKB-SubCell"/>
</dbReference>
<dbReference type="GO" id="GO:0005737">
    <property type="term" value="C:cytoplasm"/>
    <property type="evidence" value="ECO:0007669"/>
    <property type="project" value="UniProtKB-KW"/>
</dbReference>
<dbReference type="GO" id="GO:0005874">
    <property type="term" value="C:microtubule"/>
    <property type="evidence" value="ECO:0007669"/>
    <property type="project" value="UniProtKB-KW"/>
</dbReference>
<dbReference type="GO" id="GO:0005875">
    <property type="term" value="C:microtubule associated complex"/>
    <property type="evidence" value="ECO:0000318"/>
    <property type="project" value="GO_Central"/>
</dbReference>
<dbReference type="GO" id="GO:0005634">
    <property type="term" value="C:nucleus"/>
    <property type="evidence" value="ECO:0007669"/>
    <property type="project" value="UniProtKB-SubCell"/>
</dbReference>
<dbReference type="GO" id="GO:0005524">
    <property type="term" value="F:ATP binding"/>
    <property type="evidence" value="ECO:0007669"/>
    <property type="project" value="UniProtKB-KW"/>
</dbReference>
<dbReference type="GO" id="GO:0003677">
    <property type="term" value="F:DNA binding"/>
    <property type="evidence" value="ECO:0007669"/>
    <property type="project" value="UniProtKB-KW"/>
</dbReference>
<dbReference type="GO" id="GO:0051536">
    <property type="term" value="F:iron-sulfur cluster binding"/>
    <property type="evidence" value="ECO:0007669"/>
    <property type="project" value="UniProtKB-KW"/>
</dbReference>
<dbReference type="GO" id="GO:0046872">
    <property type="term" value="F:metal ion binding"/>
    <property type="evidence" value="ECO:0007669"/>
    <property type="project" value="UniProtKB-KW"/>
</dbReference>
<dbReference type="GO" id="GO:0008017">
    <property type="term" value="F:microtubule binding"/>
    <property type="evidence" value="ECO:0007669"/>
    <property type="project" value="InterPro"/>
</dbReference>
<dbReference type="GO" id="GO:0003777">
    <property type="term" value="F:microtubule motor activity"/>
    <property type="evidence" value="ECO:0000318"/>
    <property type="project" value="GO_Central"/>
</dbReference>
<dbReference type="GO" id="GO:0007018">
    <property type="term" value="P:microtubule-based movement"/>
    <property type="evidence" value="ECO:0007669"/>
    <property type="project" value="InterPro"/>
</dbReference>
<dbReference type="GO" id="GO:0007052">
    <property type="term" value="P:mitotic spindle organization"/>
    <property type="evidence" value="ECO:0000318"/>
    <property type="project" value="GO_Central"/>
</dbReference>
<dbReference type="GO" id="GO:0051231">
    <property type="term" value="P:spindle elongation"/>
    <property type="evidence" value="ECO:0000318"/>
    <property type="project" value="GO_Central"/>
</dbReference>
<dbReference type="CDD" id="cd01372">
    <property type="entry name" value="KISc_KIF4"/>
    <property type="match status" value="1"/>
</dbReference>
<dbReference type="FunFam" id="3.40.850.10:FF:000038">
    <property type="entry name" value="chromosome-associated kinesin KIF4A"/>
    <property type="match status" value="1"/>
</dbReference>
<dbReference type="Gene3D" id="3.40.850.10">
    <property type="entry name" value="Kinesin motor domain"/>
    <property type="match status" value="1"/>
</dbReference>
<dbReference type="InterPro" id="IPR027640">
    <property type="entry name" value="Kinesin-like_fam"/>
</dbReference>
<dbReference type="InterPro" id="IPR019821">
    <property type="entry name" value="Kinesin_motor_CS"/>
</dbReference>
<dbReference type="InterPro" id="IPR001752">
    <property type="entry name" value="Kinesin_motor_dom"/>
</dbReference>
<dbReference type="InterPro" id="IPR036961">
    <property type="entry name" value="Kinesin_motor_dom_sf"/>
</dbReference>
<dbReference type="InterPro" id="IPR027417">
    <property type="entry name" value="P-loop_NTPase"/>
</dbReference>
<dbReference type="InterPro" id="IPR033467">
    <property type="entry name" value="Tesmin/TSO1-like_CXC"/>
</dbReference>
<dbReference type="PANTHER" id="PTHR47969">
    <property type="entry name" value="CHROMOSOME-ASSOCIATED KINESIN KIF4A-RELATED"/>
    <property type="match status" value="1"/>
</dbReference>
<dbReference type="PANTHER" id="PTHR47969:SF15">
    <property type="entry name" value="CHROMOSOME-ASSOCIATED KINESIN KIF4A-RELATED"/>
    <property type="match status" value="1"/>
</dbReference>
<dbReference type="Pfam" id="PF00225">
    <property type="entry name" value="Kinesin"/>
    <property type="match status" value="1"/>
</dbReference>
<dbReference type="PRINTS" id="PR00380">
    <property type="entry name" value="KINESINHEAVY"/>
</dbReference>
<dbReference type="SMART" id="SM01114">
    <property type="entry name" value="CXC"/>
    <property type="match status" value="1"/>
</dbReference>
<dbReference type="SMART" id="SM00129">
    <property type="entry name" value="KISc"/>
    <property type="match status" value="1"/>
</dbReference>
<dbReference type="SUPFAM" id="SSF52540">
    <property type="entry name" value="P-loop containing nucleoside triphosphate hydrolases"/>
    <property type="match status" value="1"/>
</dbReference>
<dbReference type="PROSITE" id="PS00411">
    <property type="entry name" value="KINESIN_MOTOR_1"/>
    <property type="match status" value="1"/>
</dbReference>
<dbReference type="PROSITE" id="PS50067">
    <property type="entry name" value="KINESIN_MOTOR_2"/>
    <property type="match status" value="1"/>
</dbReference>
<keyword id="KW-0067">ATP-binding</keyword>
<keyword id="KW-0158">Chromosome</keyword>
<keyword id="KW-0175">Coiled coil</keyword>
<keyword id="KW-0963">Cytoplasm</keyword>
<keyword id="KW-0206">Cytoskeleton</keyword>
<keyword id="KW-0238">DNA-binding</keyword>
<keyword id="KW-0408">Iron</keyword>
<keyword id="KW-0411">Iron-sulfur</keyword>
<keyword id="KW-0479">Metal-binding</keyword>
<keyword id="KW-0493">Microtubule</keyword>
<keyword id="KW-0505">Motor protein</keyword>
<keyword id="KW-0547">Nucleotide-binding</keyword>
<keyword id="KW-0539">Nucleus</keyword>
<keyword id="KW-1185">Reference proteome</keyword>
<organism>
    <name type="scientific">Xenopus laevis</name>
    <name type="common">African clawed frog</name>
    <dbReference type="NCBI Taxonomy" id="8355"/>
    <lineage>
        <taxon>Eukaryota</taxon>
        <taxon>Metazoa</taxon>
        <taxon>Chordata</taxon>
        <taxon>Craniata</taxon>
        <taxon>Vertebrata</taxon>
        <taxon>Euteleostomi</taxon>
        <taxon>Amphibia</taxon>
        <taxon>Batrachia</taxon>
        <taxon>Anura</taxon>
        <taxon>Pipoidea</taxon>
        <taxon>Pipidae</taxon>
        <taxon>Xenopodinae</taxon>
        <taxon>Xenopus</taxon>
        <taxon>Xenopus</taxon>
    </lineage>
</organism>
<comment type="function">
    <text evidence="1 5">Iron-sulfur (Fe-S) cluster binding motor protein that has a role in chromosome segregation during mitosis (By similarity). Required for mitotic chromosomal positioning and bipolar spindle stabilization.</text>
</comment>
<comment type="cofactor">
    <cofactor evidence="1">
        <name>[2Fe-2S] cluster</name>
        <dbReference type="ChEBI" id="CHEBI:190135"/>
    </cofactor>
    <cofactor evidence="1">
        <name>[4Fe-4S] cluster</name>
        <dbReference type="ChEBI" id="CHEBI:49883"/>
    </cofactor>
    <text evidence="1">Binds 1 [4Fe-4S] cluster (By similarity). In the presence of oxygen, the [4Fe-4S] cluster may be converted to [2Fe-2S] (By similarity).</text>
</comment>
<comment type="subcellular location">
    <subcellularLocation>
        <location evidence="5">Nucleus</location>
    </subcellularLocation>
    <subcellularLocation>
        <location evidence="5">Chromosome</location>
    </subcellularLocation>
    <subcellularLocation>
        <location evidence="7">Cytoplasm</location>
        <location evidence="7">Cytoskeleton</location>
    </subcellularLocation>
    <text>Associated with mitotic chromosomes.</text>
</comment>
<comment type="tissue specificity">
    <text evidence="5">Expressed in oocytes, eggs, testes and brain.</text>
</comment>
<comment type="similarity">
    <text evidence="3">Belongs to the TRAFAC class myosin-kinesin ATPase superfamily. Kinesin family. Chromokinesin subfamily.</text>
</comment>
<reference key="1">
    <citation type="journal article" date="1995" name="Cell">
        <title>Xklp1, a chromosomal Xenopus kinesin-like protein essential for spindle organization and chromosome positioning.</title>
        <authorList>
            <person name="Vernos I."/>
            <person name="Raats J."/>
            <person name="Hirano T."/>
            <person name="Heasman J."/>
            <person name="Karsenti E."/>
            <person name="Wylie C."/>
        </authorList>
    </citation>
    <scope>NUCLEOTIDE SEQUENCE [MRNA]</scope>
    <scope>FUNCTION</scope>
    <scope>SUBCELLULAR LOCATION</scope>
    <scope>TISSUE SPECIFICITY</scope>
    <source>
        <tissue>Oocyte</tissue>
    </source>
</reference>
<reference key="2">
    <citation type="journal article" date="1993" name="Dev. Biol.">
        <title>Multiple kinesin-like transcripts in Xenopus oocytes.</title>
        <authorList>
            <person name="Vernos I."/>
            <person name="Heasman J."/>
            <person name="Wylie C."/>
        </authorList>
    </citation>
    <scope>NUCLEOTIDE SEQUENCE [MRNA] OF 9-338</scope>
</reference>
<name>KIF4_XENLA</name>
<feature type="chain" id="PRO_0000125440" description="Chromosome-associated kinesin KIF4">
    <location>
        <begin position="1"/>
        <end position="1226"/>
    </location>
</feature>
<feature type="domain" description="Kinesin motor" evidence="3">
    <location>
        <begin position="8"/>
        <end position="337"/>
    </location>
</feature>
<feature type="region of interest" description="Disordered" evidence="4">
    <location>
        <begin position="494"/>
        <end position="516"/>
    </location>
</feature>
<feature type="region of interest" description="Disordered" evidence="4">
    <location>
        <begin position="722"/>
        <end position="741"/>
    </location>
</feature>
<feature type="region of interest" description="Globular">
    <location>
        <begin position="1007"/>
        <end position="1226"/>
    </location>
</feature>
<feature type="region of interest" description="Disordered" evidence="4">
    <location>
        <begin position="1052"/>
        <end position="1078"/>
    </location>
</feature>
<feature type="coiled-coil region" evidence="2">
    <location>
        <begin position="351"/>
        <end position="1006"/>
    </location>
</feature>
<feature type="compositionally biased region" description="Acidic residues" evidence="4">
    <location>
        <begin position="494"/>
        <end position="505"/>
    </location>
</feature>
<feature type="compositionally biased region" description="Basic and acidic residues" evidence="4">
    <location>
        <begin position="722"/>
        <end position="735"/>
    </location>
</feature>
<feature type="compositionally biased region" description="Acidic residues" evidence="4">
    <location>
        <begin position="1053"/>
        <end position="1064"/>
    </location>
</feature>
<feature type="binding site" evidence="3">
    <location>
        <begin position="87"/>
        <end position="94"/>
    </location>
    <ligand>
        <name>ATP</name>
        <dbReference type="ChEBI" id="CHEBI:30616"/>
    </ligand>
</feature>
<feature type="sequence conflict" description="In Ref. 2." evidence="6" ref="2">
    <original>I</original>
    <variation>L</variation>
    <location>
        <position position="163"/>
    </location>
</feature>
<proteinExistence type="evidence at transcript level"/>
<evidence type="ECO:0000250" key="1">
    <source>
        <dbReference type="UniProtKB" id="O95239"/>
    </source>
</evidence>
<evidence type="ECO:0000255" key="2"/>
<evidence type="ECO:0000255" key="3">
    <source>
        <dbReference type="PROSITE-ProRule" id="PRU00283"/>
    </source>
</evidence>
<evidence type="ECO:0000256" key="4">
    <source>
        <dbReference type="SAM" id="MobiDB-lite"/>
    </source>
</evidence>
<evidence type="ECO:0000269" key="5">
    <source>
    </source>
</evidence>
<evidence type="ECO:0000305" key="6"/>
<evidence type="ECO:0000305" key="7">
    <source>
    </source>
</evidence>
<gene>
    <name type="primary">kif4</name>
    <name type="synonym">kif4a</name>
    <name type="synonym">klp1</name>
</gene>
<accession>Q91784</accession>
<accession>Q9PSI0</accession>